<gene>
    <name evidence="1" type="primary">dnaA</name>
    <name type="ordered locus">ASA_0001</name>
</gene>
<proteinExistence type="inferred from homology"/>
<comment type="function">
    <text evidence="1">Plays an essential role in the initiation and regulation of chromosomal replication. ATP-DnaA binds to the origin of replication (oriC) to initiate formation of the DNA replication initiation complex once per cell cycle. Binds the DnaA box (a 9 base pair repeat at the origin) and separates the double-stranded (ds)DNA. Forms a right-handed helical filament on oriC DNA; dsDNA binds to the exterior of the filament while single-stranded (ss)DNA is stabiized in the filament's interior. The ATP-DnaA-oriC complex binds and stabilizes one strand of the AT-rich DNA unwinding element (DUE), permitting loading of DNA polymerase. After initiation quickly degrades to an ADP-DnaA complex that is not apt for DNA replication. Binds acidic phospholipids.</text>
</comment>
<comment type="subunit">
    <text evidence="1">Oligomerizes as a right-handed, spiral filament on DNA at oriC.</text>
</comment>
<comment type="subcellular location">
    <subcellularLocation>
        <location evidence="1">Cytoplasm</location>
    </subcellularLocation>
</comment>
<comment type="domain">
    <text evidence="1">Domain I is involved in oligomerization and binding regulators, domain II is flexibile and of varying length in different bacteria, domain III forms the AAA+ region, while domain IV binds dsDNA.</text>
</comment>
<comment type="similarity">
    <text evidence="1">Belongs to the DnaA family.</text>
</comment>
<organism>
    <name type="scientific">Aeromonas salmonicida (strain A449)</name>
    <dbReference type="NCBI Taxonomy" id="382245"/>
    <lineage>
        <taxon>Bacteria</taxon>
        <taxon>Pseudomonadati</taxon>
        <taxon>Pseudomonadota</taxon>
        <taxon>Gammaproteobacteria</taxon>
        <taxon>Aeromonadales</taxon>
        <taxon>Aeromonadaceae</taxon>
        <taxon>Aeromonas</taxon>
    </lineage>
</organism>
<reference key="1">
    <citation type="journal article" date="2008" name="BMC Genomics">
        <title>The genome of Aeromonas salmonicida subsp. salmonicida A449: insights into the evolution of a fish pathogen.</title>
        <authorList>
            <person name="Reith M.E."/>
            <person name="Singh R.K."/>
            <person name="Curtis B."/>
            <person name="Boyd J.M."/>
            <person name="Bouevitch A."/>
            <person name="Kimball J."/>
            <person name="Munholland J."/>
            <person name="Murphy C."/>
            <person name="Sarty D."/>
            <person name="Williams J."/>
            <person name="Nash J.H."/>
            <person name="Johnson S.C."/>
            <person name="Brown L.L."/>
        </authorList>
    </citation>
    <scope>NUCLEOTIDE SEQUENCE [LARGE SCALE GENOMIC DNA]</scope>
    <source>
        <strain>A449</strain>
    </source>
</reference>
<protein>
    <recommendedName>
        <fullName evidence="1">Chromosomal replication initiator protein DnaA</fullName>
    </recommendedName>
</protein>
<keyword id="KW-0067">ATP-binding</keyword>
<keyword id="KW-0963">Cytoplasm</keyword>
<keyword id="KW-0235">DNA replication</keyword>
<keyword id="KW-0238">DNA-binding</keyword>
<keyword id="KW-0446">Lipid-binding</keyword>
<keyword id="KW-0547">Nucleotide-binding</keyword>
<name>DNAA_AERS4</name>
<feature type="chain" id="PRO_1000048600" description="Chromosomal replication initiator protein DnaA">
    <location>
        <begin position="1"/>
        <end position="456"/>
    </location>
</feature>
<feature type="region of interest" description="Domain I, interacts with DnaA modulators" evidence="1">
    <location>
        <begin position="1"/>
        <end position="83"/>
    </location>
</feature>
<feature type="region of interest" description="Domain II" evidence="1">
    <location>
        <begin position="83"/>
        <end position="119"/>
    </location>
</feature>
<feature type="region of interest" description="Domain III, AAA+ region" evidence="1">
    <location>
        <begin position="120"/>
        <end position="336"/>
    </location>
</feature>
<feature type="region of interest" description="Domain IV, binds dsDNA" evidence="1">
    <location>
        <begin position="337"/>
        <end position="456"/>
    </location>
</feature>
<feature type="binding site" evidence="1">
    <location>
        <position position="164"/>
    </location>
    <ligand>
        <name>ATP</name>
        <dbReference type="ChEBI" id="CHEBI:30616"/>
    </ligand>
</feature>
<feature type="binding site" evidence="1">
    <location>
        <position position="166"/>
    </location>
    <ligand>
        <name>ATP</name>
        <dbReference type="ChEBI" id="CHEBI:30616"/>
    </ligand>
</feature>
<feature type="binding site" evidence="1">
    <location>
        <position position="167"/>
    </location>
    <ligand>
        <name>ATP</name>
        <dbReference type="ChEBI" id="CHEBI:30616"/>
    </ligand>
</feature>
<feature type="binding site" evidence="1">
    <location>
        <position position="168"/>
    </location>
    <ligand>
        <name>ATP</name>
        <dbReference type="ChEBI" id="CHEBI:30616"/>
    </ligand>
</feature>
<dbReference type="EMBL" id="CP000644">
    <property type="protein sequence ID" value="ABO88218.1"/>
    <property type="molecule type" value="Genomic_DNA"/>
</dbReference>
<dbReference type="RefSeq" id="WP_011898201.1">
    <property type="nucleotide sequence ID" value="NC_009348.1"/>
</dbReference>
<dbReference type="SMR" id="A4SH46"/>
<dbReference type="STRING" id="29491.GCA_000820065_00553"/>
<dbReference type="KEGG" id="asa:ASA_0001"/>
<dbReference type="PATRIC" id="fig|382245.13.peg.15"/>
<dbReference type="eggNOG" id="COG0593">
    <property type="taxonomic scope" value="Bacteria"/>
</dbReference>
<dbReference type="HOGENOM" id="CLU_026910_0_1_6"/>
<dbReference type="Proteomes" id="UP000000225">
    <property type="component" value="Chromosome"/>
</dbReference>
<dbReference type="GO" id="GO:0005737">
    <property type="term" value="C:cytoplasm"/>
    <property type="evidence" value="ECO:0007669"/>
    <property type="project" value="UniProtKB-SubCell"/>
</dbReference>
<dbReference type="GO" id="GO:0005886">
    <property type="term" value="C:plasma membrane"/>
    <property type="evidence" value="ECO:0007669"/>
    <property type="project" value="TreeGrafter"/>
</dbReference>
<dbReference type="GO" id="GO:0005524">
    <property type="term" value="F:ATP binding"/>
    <property type="evidence" value="ECO:0007669"/>
    <property type="project" value="UniProtKB-UniRule"/>
</dbReference>
<dbReference type="GO" id="GO:0016887">
    <property type="term" value="F:ATP hydrolysis activity"/>
    <property type="evidence" value="ECO:0007669"/>
    <property type="project" value="InterPro"/>
</dbReference>
<dbReference type="GO" id="GO:0003688">
    <property type="term" value="F:DNA replication origin binding"/>
    <property type="evidence" value="ECO:0007669"/>
    <property type="project" value="UniProtKB-UniRule"/>
</dbReference>
<dbReference type="GO" id="GO:0008289">
    <property type="term" value="F:lipid binding"/>
    <property type="evidence" value="ECO:0007669"/>
    <property type="project" value="UniProtKB-KW"/>
</dbReference>
<dbReference type="GO" id="GO:0006270">
    <property type="term" value="P:DNA replication initiation"/>
    <property type="evidence" value="ECO:0007669"/>
    <property type="project" value="UniProtKB-UniRule"/>
</dbReference>
<dbReference type="GO" id="GO:0006275">
    <property type="term" value="P:regulation of DNA replication"/>
    <property type="evidence" value="ECO:0007669"/>
    <property type="project" value="UniProtKB-UniRule"/>
</dbReference>
<dbReference type="CDD" id="cd00009">
    <property type="entry name" value="AAA"/>
    <property type="match status" value="1"/>
</dbReference>
<dbReference type="CDD" id="cd06571">
    <property type="entry name" value="Bac_DnaA_C"/>
    <property type="match status" value="1"/>
</dbReference>
<dbReference type="FunFam" id="1.10.1750.10:FF:000001">
    <property type="entry name" value="Chromosomal replication initiator protein DnaA"/>
    <property type="match status" value="1"/>
</dbReference>
<dbReference type="FunFam" id="1.10.8.60:FF:000003">
    <property type="entry name" value="Chromosomal replication initiator protein DnaA"/>
    <property type="match status" value="1"/>
</dbReference>
<dbReference type="FunFam" id="3.30.300.180:FF:000001">
    <property type="entry name" value="Chromosomal replication initiator protein DnaA"/>
    <property type="match status" value="1"/>
</dbReference>
<dbReference type="FunFam" id="3.40.50.300:FF:000103">
    <property type="entry name" value="Chromosomal replication initiator protein DnaA"/>
    <property type="match status" value="1"/>
</dbReference>
<dbReference type="Gene3D" id="1.10.1750.10">
    <property type="match status" value="1"/>
</dbReference>
<dbReference type="Gene3D" id="1.10.8.60">
    <property type="match status" value="1"/>
</dbReference>
<dbReference type="Gene3D" id="3.30.300.180">
    <property type="match status" value="1"/>
</dbReference>
<dbReference type="Gene3D" id="3.40.50.300">
    <property type="entry name" value="P-loop containing nucleotide triphosphate hydrolases"/>
    <property type="match status" value="1"/>
</dbReference>
<dbReference type="HAMAP" id="MF_00377">
    <property type="entry name" value="DnaA_bact"/>
    <property type="match status" value="1"/>
</dbReference>
<dbReference type="InterPro" id="IPR003593">
    <property type="entry name" value="AAA+_ATPase"/>
</dbReference>
<dbReference type="InterPro" id="IPR001957">
    <property type="entry name" value="Chromosome_initiator_DnaA"/>
</dbReference>
<dbReference type="InterPro" id="IPR020591">
    <property type="entry name" value="Chromosome_initiator_DnaA-like"/>
</dbReference>
<dbReference type="InterPro" id="IPR018312">
    <property type="entry name" value="Chromosome_initiator_DnaA_CS"/>
</dbReference>
<dbReference type="InterPro" id="IPR013159">
    <property type="entry name" value="DnaA_C"/>
</dbReference>
<dbReference type="InterPro" id="IPR013317">
    <property type="entry name" value="DnaA_dom"/>
</dbReference>
<dbReference type="InterPro" id="IPR024633">
    <property type="entry name" value="DnaA_N_dom"/>
</dbReference>
<dbReference type="InterPro" id="IPR038454">
    <property type="entry name" value="DnaA_N_sf"/>
</dbReference>
<dbReference type="InterPro" id="IPR027417">
    <property type="entry name" value="P-loop_NTPase"/>
</dbReference>
<dbReference type="InterPro" id="IPR010921">
    <property type="entry name" value="Trp_repressor/repl_initiator"/>
</dbReference>
<dbReference type="NCBIfam" id="TIGR00362">
    <property type="entry name" value="DnaA"/>
    <property type="match status" value="1"/>
</dbReference>
<dbReference type="PANTHER" id="PTHR30050">
    <property type="entry name" value="CHROMOSOMAL REPLICATION INITIATOR PROTEIN DNAA"/>
    <property type="match status" value="1"/>
</dbReference>
<dbReference type="PANTHER" id="PTHR30050:SF2">
    <property type="entry name" value="CHROMOSOMAL REPLICATION INITIATOR PROTEIN DNAA"/>
    <property type="match status" value="1"/>
</dbReference>
<dbReference type="Pfam" id="PF00308">
    <property type="entry name" value="Bac_DnaA"/>
    <property type="match status" value="1"/>
</dbReference>
<dbReference type="Pfam" id="PF08299">
    <property type="entry name" value="Bac_DnaA_C"/>
    <property type="match status" value="1"/>
</dbReference>
<dbReference type="Pfam" id="PF11638">
    <property type="entry name" value="DnaA_N"/>
    <property type="match status" value="1"/>
</dbReference>
<dbReference type="PRINTS" id="PR00051">
    <property type="entry name" value="DNAA"/>
</dbReference>
<dbReference type="SMART" id="SM00382">
    <property type="entry name" value="AAA"/>
    <property type="match status" value="1"/>
</dbReference>
<dbReference type="SMART" id="SM00760">
    <property type="entry name" value="Bac_DnaA_C"/>
    <property type="match status" value="1"/>
</dbReference>
<dbReference type="SUPFAM" id="SSF52540">
    <property type="entry name" value="P-loop containing nucleoside triphosphate hydrolases"/>
    <property type="match status" value="1"/>
</dbReference>
<dbReference type="SUPFAM" id="SSF48295">
    <property type="entry name" value="TrpR-like"/>
    <property type="match status" value="1"/>
</dbReference>
<dbReference type="PROSITE" id="PS01008">
    <property type="entry name" value="DNAA"/>
    <property type="match status" value="1"/>
</dbReference>
<evidence type="ECO:0000255" key="1">
    <source>
        <dbReference type="HAMAP-Rule" id="MF_00377"/>
    </source>
</evidence>
<accession>A4SH46</accession>
<sequence length="456" mass="51861">MTASLWQQCLNRLQDELPSAEFSMWIRPLQAELSDNTLTLYAPNRFVLDWVRDKYLIRVNGIINELCGVDGPTLRFDIGNRPHPVAIARAPARGAAPVNNLQKSWESKADAKPEPNHKSNTNVNYTFENFVEGKSNQLARAAARQVADNPGGAYNPLFLYGGTGLGKTHLLHAVGNAIKERKKDAKVIYMHSERFVQDMVKALQNNAIEEFKRYYRSVDALLIDDIQFFANKERSQEEFFHTFNALLEGNQQIILTSDRYPKEINGVEDRLKSRFGWGLTVAIEPPELETRVAILMRKADENQIHLPDEVAFFIAKRLRSNVRELEGALNRVIANANFTGRAINIDFVREALRDLLALQEKLVTIDNIQKTVAEYYKIKLADLLSKRRSRSVARPRQLAMALAKELTNHSLPEIGDAFGGREHTTVLHACRKIEQLKEESHDIKEDYSNLIRTLSS</sequence>